<sequence>MEKPYNKNEGNLENEGKPEDEVEPDDEGKSDEEEKPDAEGKTECEGKRKAEGEPGDEGQLEDKGSQEKQGKSEGEGKPQGEGKPASQAKPEGQPRAAEKRPAGDYVPRKAKRKTDRGTDDSPKDSQEDLQERHLSSEEMMRECGDVSRAQEELRKKQKMGGFHWMQRDVQDPFAPRGQRGVRGVRGGGRGQRGLHDIPYL</sequence>
<comment type="function">
    <text>May be involved in transcriptional regulation.</text>
</comment>
<comment type="subcellular location">
    <subcellularLocation>
        <location evidence="3">Nucleus</location>
    </subcellularLocation>
</comment>
<comment type="alternative products">
    <event type="alternative splicing"/>
    <isoform>
        <id>Q6IPX3-1</id>
        <name>1</name>
        <sequence type="displayed"/>
    </isoform>
    <isoform>
        <id>Q6IPX3-2</id>
        <name>2</name>
        <sequence type="described" ref="VSP_019110"/>
    </isoform>
</comment>
<comment type="similarity">
    <text evidence="3">Belongs to the TFS-II family. TFA subfamily.</text>
</comment>
<reference key="1">
    <citation type="journal article" date="2005" name="Nature">
        <title>The DNA sequence of the human X chromosome.</title>
        <authorList>
            <person name="Ross M.T."/>
            <person name="Grafham D.V."/>
            <person name="Coffey A.J."/>
            <person name="Scherer S."/>
            <person name="McLay K."/>
            <person name="Muzny D."/>
            <person name="Platzer M."/>
            <person name="Howell G.R."/>
            <person name="Burrows C."/>
            <person name="Bird C.P."/>
            <person name="Frankish A."/>
            <person name="Lovell F.L."/>
            <person name="Howe K.L."/>
            <person name="Ashurst J.L."/>
            <person name="Fulton R.S."/>
            <person name="Sudbrak R."/>
            <person name="Wen G."/>
            <person name="Jones M.C."/>
            <person name="Hurles M.E."/>
            <person name="Andrews T.D."/>
            <person name="Scott C.E."/>
            <person name="Searle S."/>
            <person name="Ramser J."/>
            <person name="Whittaker A."/>
            <person name="Deadman R."/>
            <person name="Carter N.P."/>
            <person name="Hunt S.E."/>
            <person name="Chen R."/>
            <person name="Cree A."/>
            <person name="Gunaratne P."/>
            <person name="Havlak P."/>
            <person name="Hodgson A."/>
            <person name="Metzker M.L."/>
            <person name="Richards S."/>
            <person name="Scott G."/>
            <person name="Steffen D."/>
            <person name="Sodergren E."/>
            <person name="Wheeler D.A."/>
            <person name="Worley K.C."/>
            <person name="Ainscough R."/>
            <person name="Ambrose K.D."/>
            <person name="Ansari-Lari M.A."/>
            <person name="Aradhya S."/>
            <person name="Ashwell R.I."/>
            <person name="Babbage A.K."/>
            <person name="Bagguley C.L."/>
            <person name="Ballabio A."/>
            <person name="Banerjee R."/>
            <person name="Barker G.E."/>
            <person name="Barlow K.F."/>
            <person name="Barrett I.P."/>
            <person name="Bates K.N."/>
            <person name="Beare D.M."/>
            <person name="Beasley H."/>
            <person name="Beasley O."/>
            <person name="Beck A."/>
            <person name="Bethel G."/>
            <person name="Blechschmidt K."/>
            <person name="Brady N."/>
            <person name="Bray-Allen S."/>
            <person name="Bridgeman A.M."/>
            <person name="Brown A.J."/>
            <person name="Brown M.J."/>
            <person name="Bonnin D."/>
            <person name="Bruford E.A."/>
            <person name="Buhay C."/>
            <person name="Burch P."/>
            <person name="Burford D."/>
            <person name="Burgess J."/>
            <person name="Burrill W."/>
            <person name="Burton J."/>
            <person name="Bye J.M."/>
            <person name="Carder C."/>
            <person name="Carrel L."/>
            <person name="Chako J."/>
            <person name="Chapman J.C."/>
            <person name="Chavez D."/>
            <person name="Chen E."/>
            <person name="Chen G."/>
            <person name="Chen Y."/>
            <person name="Chen Z."/>
            <person name="Chinault C."/>
            <person name="Ciccodicola A."/>
            <person name="Clark S.Y."/>
            <person name="Clarke G."/>
            <person name="Clee C.M."/>
            <person name="Clegg S."/>
            <person name="Clerc-Blankenburg K."/>
            <person name="Clifford K."/>
            <person name="Cobley V."/>
            <person name="Cole C.G."/>
            <person name="Conquer J.S."/>
            <person name="Corby N."/>
            <person name="Connor R.E."/>
            <person name="David R."/>
            <person name="Davies J."/>
            <person name="Davis C."/>
            <person name="Davis J."/>
            <person name="Delgado O."/>
            <person name="Deshazo D."/>
            <person name="Dhami P."/>
            <person name="Ding Y."/>
            <person name="Dinh H."/>
            <person name="Dodsworth S."/>
            <person name="Draper H."/>
            <person name="Dugan-Rocha S."/>
            <person name="Dunham A."/>
            <person name="Dunn M."/>
            <person name="Durbin K.J."/>
            <person name="Dutta I."/>
            <person name="Eades T."/>
            <person name="Ellwood M."/>
            <person name="Emery-Cohen A."/>
            <person name="Errington H."/>
            <person name="Evans K.L."/>
            <person name="Faulkner L."/>
            <person name="Francis F."/>
            <person name="Frankland J."/>
            <person name="Fraser A.E."/>
            <person name="Galgoczy P."/>
            <person name="Gilbert J."/>
            <person name="Gill R."/>
            <person name="Gloeckner G."/>
            <person name="Gregory S.G."/>
            <person name="Gribble S."/>
            <person name="Griffiths C."/>
            <person name="Grocock R."/>
            <person name="Gu Y."/>
            <person name="Gwilliam R."/>
            <person name="Hamilton C."/>
            <person name="Hart E.A."/>
            <person name="Hawes A."/>
            <person name="Heath P.D."/>
            <person name="Heitmann K."/>
            <person name="Hennig S."/>
            <person name="Hernandez J."/>
            <person name="Hinzmann B."/>
            <person name="Ho S."/>
            <person name="Hoffs M."/>
            <person name="Howden P.J."/>
            <person name="Huckle E.J."/>
            <person name="Hume J."/>
            <person name="Hunt P.J."/>
            <person name="Hunt A.R."/>
            <person name="Isherwood J."/>
            <person name="Jacob L."/>
            <person name="Johnson D."/>
            <person name="Jones S."/>
            <person name="de Jong P.J."/>
            <person name="Joseph S.S."/>
            <person name="Keenan S."/>
            <person name="Kelly S."/>
            <person name="Kershaw J.K."/>
            <person name="Khan Z."/>
            <person name="Kioschis P."/>
            <person name="Klages S."/>
            <person name="Knights A.J."/>
            <person name="Kosiura A."/>
            <person name="Kovar-Smith C."/>
            <person name="Laird G.K."/>
            <person name="Langford C."/>
            <person name="Lawlor S."/>
            <person name="Leversha M."/>
            <person name="Lewis L."/>
            <person name="Liu W."/>
            <person name="Lloyd C."/>
            <person name="Lloyd D.M."/>
            <person name="Loulseged H."/>
            <person name="Loveland J.E."/>
            <person name="Lovell J.D."/>
            <person name="Lozado R."/>
            <person name="Lu J."/>
            <person name="Lyne R."/>
            <person name="Ma J."/>
            <person name="Maheshwari M."/>
            <person name="Matthews L.H."/>
            <person name="McDowall J."/>
            <person name="McLaren S."/>
            <person name="McMurray A."/>
            <person name="Meidl P."/>
            <person name="Meitinger T."/>
            <person name="Milne S."/>
            <person name="Miner G."/>
            <person name="Mistry S.L."/>
            <person name="Morgan M."/>
            <person name="Morris S."/>
            <person name="Mueller I."/>
            <person name="Mullikin J.C."/>
            <person name="Nguyen N."/>
            <person name="Nordsiek G."/>
            <person name="Nyakatura G."/>
            <person name="O'dell C.N."/>
            <person name="Okwuonu G."/>
            <person name="Palmer S."/>
            <person name="Pandian R."/>
            <person name="Parker D."/>
            <person name="Parrish J."/>
            <person name="Pasternak S."/>
            <person name="Patel D."/>
            <person name="Pearce A.V."/>
            <person name="Pearson D.M."/>
            <person name="Pelan S.E."/>
            <person name="Perez L."/>
            <person name="Porter K.M."/>
            <person name="Ramsey Y."/>
            <person name="Reichwald K."/>
            <person name="Rhodes S."/>
            <person name="Ridler K.A."/>
            <person name="Schlessinger D."/>
            <person name="Schueler M.G."/>
            <person name="Sehra H.K."/>
            <person name="Shaw-Smith C."/>
            <person name="Shen H."/>
            <person name="Sheridan E.M."/>
            <person name="Shownkeen R."/>
            <person name="Skuce C.D."/>
            <person name="Smith M.L."/>
            <person name="Sotheran E.C."/>
            <person name="Steingruber H.E."/>
            <person name="Steward C.A."/>
            <person name="Storey R."/>
            <person name="Swann R.M."/>
            <person name="Swarbreck D."/>
            <person name="Tabor P.E."/>
            <person name="Taudien S."/>
            <person name="Taylor T."/>
            <person name="Teague B."/>
            <person name="Thomas K."/>
            <person name="Thorpe A."/>
            <person name="Timms K."/>
            <person name="Tracey A."/>
            <person name="Trevanion S."/>
            <person name="Tromans A.C."/>
            <person name="d'Urso M."/>
            <person name="Verduzco D."/>
            <person name="Villasana D."/>
            <person name="Waldron L."/>
            <person name="Wall M."/>
            <person name="Wang Q."/>
            <person name="Warren J."/>
            <person name="Warry G.L."/>
            <person name="Wei X."/>
            <person name="West A."/>
            <person name="Whitehead S.L."/>
            <person name="Whiteley M.N."/>
            <person name="Wilkinson J.E."/>
            <person name="Willey D.L."/>
            <person name="Williams G."/>
            <person name="Williams L."/>
            <person name="Williamson A."/>
            <person name="Williamson H."/>
            <person name="Wilming L."/>
            <person name="Woodmansey R.L."/>
            <person name="Wray P.W."/>
            <person name="Yen J."/>
            <person name="Zhang J."/>
            <person name="Zhou J."/>
            <person name="Zoghbi H."/>
            <person name="Zorilla S."/>
            <person name="Buck D."/>
            <person name="Reinhardt R."/>
            <person name="Poustka A."/>
            <person name="Rosenthal A."/>
            <person name="Lehrach H."/>
            <person name="Meindl A."/>
            <person name="Minx P.J."/>
            <person name="Hillier L.W."/>
            <person name="Willard H.F."/>
            <person name="Wilson R.K."/>
            <person name="Waterston R.H."/>
            <person name="Rice C.M."/>
            <person name="Vaudin M."/>
            <person name="Coulson A."/>
            <person name="Nelson D.L."/>
            <person name="Weinstock G."/>
            <person name="Sulston J.E."/>
            <person name="Durbin R.M."/>
            <person name="Hubbard T."/>
            <person name="Gibbs R.A."/>
            <person name="Beck S."/>
            <person name="Rogers J."/>
            <person name="Bentley D.R."/>
        </authorList>
    </citation>
    <scope>NUCLEOTIDE SEQUENCE [LARGE SCALE GENOMIC DNA]</scope>
</reference>
<reference key="2">
    <citation type="journal article" date="2004" name="Genome Res.">
        <title>The status, quality, and expansion of the NIH full-length cDNA project: the Mammalian Gene Collection (MGC).</title>
        <authorList>
            <consortium name="The MGC Project Team"/>
        </authorList>
    </citation>
    <scope>NUCLEOTIDE SEQUENCE [LARGE SCALE MRNA] (ISOFORM 1)</scope>
    <source>
        <tissue>Brain</tissue>
    </source>
</reference>
<proteinExistence type="evidence at protein level"/>
<evidence type="ECO:0000250" key="1">
    <source>
        <dbReference type="UniProtKB" id="Q969E4"/>
    </source>
</evidence>
<evidence type="ECO:0000256" key="2">
    <source>
        <dbReference type="SAM" id="MobiDB-lite"/>
    </source>
</evidence>
<evidence type="ECO:0000305" key="3"/>
<feature type="chain" id="PRO_0000239213" description="Transcription elongation factor A protein-like 6">
    <location>
        <begin position="1"/>
        <end position="200"/>
    </location>
</feature>
<feature type="region of interest" description="Disordered" evidence="2">
    <location>
        <begin position="1"/>
        <end position="200"/>
    </location>
</feature>
<feature type="compositionally biased region" description="Acidic residues" evidence="2">
    <location>
        <begin position="20"/>
        <end position="36"/>
    </location>
</feature>
<feature type="compositionally biased region" description="Basic and acidic residues" evidence="2">
    <location>
        <begin position="37"/>
        <end position="52"/>
    </location>
</feature>
<feature type="compositionally biased region" description="Basic and acidic residues" evidence="2">
    <location>
        <begin position="60"/>
        <end position="80"/>
    </location>
</feature>
<feature type="compositionally biased region" description="Basic and acidic residues" evidence="2">
    <location>
        <begin position="115"/>
        <end position="154"/>
    </location>
</feature>
<feature type="modified residue" description="Phosphoserine" evidence="1">
    <location>
        <position position="30"/>
    </location>
</feature>
<feature type="modified residue" description="Phosphoserine" evidence="1">
    <location>
        <position position="65"/>
    </location>
</feature>
<feature type="splice variant" id="VSP_019110" description="In isoform 2." evidence="3">
    <original>PRGQRGVRGVRGGGRGQRGLHDIPYL</original>
    <variation>QGDNGVSGE</variation>
    <location>
        <begin position="175"/>
        <end position="200"/>
    </location>
</feature>
<gene>
    <name type="primary">TCEAL6</name>
</gene>
<organism>
    <name type="scientific">Homo sapiens</name>
    <name type="common">Human</name>
    <dbReference type="NCBI Taxonomy" id="9606"/>
    <lineage>
        <taxon>Eukaryota</taxon>
        <taxon>Metazoa</taxon>
        <taxon>Chordata</taxon>
        <taxon>Craniata</taxon>
        <taxon>Vertebrata</taxon>
        <taxon>Euteleostomi</taxon>
        <taxon>Mammalia</taxon>
        <taxon>Eutheria</taxon>
        <taxon>Euarchontoglires</taxon>
        <taxon>Primates</taxon>
        <taxon>Haplorrhini</taxon>
        <taxon>Catarrhini</taxon>
        <taxon>Hominidae</taxon>
        <taxon>Homo</taxon>
    </lineage>
</organism>
<name>TCAL6_HUMAN</name>
<protein>
    <recommendedName>
        <fullName>Transcription elongation factor A protein-like 6</fullName>
        <shortName>TCEA-like protein 6</shortName>
    </recommendedName>
    <alternativeName>
        <fullName>Transcription elongation factor S-II protein-like 6</fullName>
    </alternativeName>
</protein>
<dbReference type="EMBL" id="Z70719">
    <property type="status" value="NOT_ANNOTATED_CDS"/>
    <property type="molecule type" value="Genomic_DNA"/>
</dbReference>
<dbReference type="EMBL" id="BC071675">
    <property type="protein sequence ID" value="AAH71675.1"/>
    <property type="molecule type" value="mRNA"/>
</dbReference>
<dbReference type="RefSeq" id="NP_001006939.2">
    <molecule id="Q6IPX3-2"/>
    <property type="nucleotide sequence ID" value="NM_001006938.3"/>
</dbReference>
<dbReference type="RefSeq" id="NP_001354719.1">
    <molecule id="Q6IPX3-1"/>
    <property type="nucleotide sequence ID" value="NM_001367790.1"/>
</dbReference>
<dbReference type="IntAct" id="Q6IPX3">
    <property type="interactions" value="2"/>
</dbReference>
<dbReference type="iPTMnet" id="Q6IPX3"/>
<dbReference type="PhosphoSitePlus" id="Q6IPX3"/>
<dbReference type="BioMuta" id="TCEAL6"/>
<dbReference type="DMDM" id="74736570"/>
<dbReference type="jPOST" id="Q6IPX3"/>
<dbReference type="MassIVE" id="Q6IPX3"/>
<dbReference type="PeptideAtlas" id="Q6IPX3"/>
<dbReference type="ProteomicsDB" id="66466">
    <molecule id="Q6IPX3-1"/>
</dbReference>
<dbReference type="ProteomicsDB" id="66467">
    <molecule id="Q6IPX3-2"/>
</dbReference>
<dbReference type="Pumba" id="Q6IPX3"/>
<dbReference type="Antibodypedia" id="28849">
    <property type="antibodies" value="126 antibodies from 18 providers"/>
</dbReference>
<dbReference type="Ensembl" id="ENST00000372773.2">
    <property type="protein sequence ID" value="ENSP00000361859.2"/>
    <property type="gene ID" value="ENSG00000204071.11"/>
</dbReference>
<dbReference type="Ensembl" id="ENST00000372774.8">
    <property type="protein sequence ID" value="ENSP00000361860.4"/>
    <property type="gene ID" value="ENSG00000204071.11"/>
</dbReference>
<dbReference type="Ensembl" id="ENST00000708883.3">
    <molecule id="Q6IPX3-1"/>
    <property type="protein sequence ID" value="ENSP00000517396.1"/>
    <property type="gene ID" value="ENSG00000291827.3"/>
</dbReference>
<dbReference type="Ensembl" id="ENST00000708884.1">
    <molecule id="Q6IPX3-1"/>
    <property type="protein sequence ID" value="ENSP00000517397.1"/>
    <property type="gene ID" value="ENSG00000291827.3"/>
</dbReference>
<dbReference type="GeneID" id="158931"/>
<dbReference type="KEGG" id="hsa:158931"/>
<dbReference type="MANE-Select" id="ENST00000708883.3">
    <property type="protein sequence ID" value="ENSP00000517396.1"/>
    <property type="RefSeq nucleotide sequence ID" value="NM_001367790.1"/>
    <property type="RefSeq protein sequence ID" value="NP_001354719.1"/>
</dbReference>
<dbReference type="UCSC" id="uc004eiq.4">
    <molecule id="Q6IPX3-1"/>
    <property type="organism name" value="human"/>
</dbReference>
<dbReference type="AGR" id="HGNC:24553"/>
<dbReference type="CTD" id="158931"/>
<dbReference type="GeneCards" id="TCEAL6"/>
<dbReference type="HGNC" id="HGNC:24553">
    <property type="gene designation" value="TCEAL6"/>
</dbReference>
<dbReference type="HPA" id="ENSG00000204071">
    <property type="expression patterns" value="Group enriched (brain, pituitary gland, testis)"/>
</dbReference>
<dbReference type="neXtProt" id="NX_Q6IPX3"/>
<dbReference type="PharmGKB" id="PA142670828"/>
<dbReference type="VEuPathDB" id="HostDB:ENSG00000204071"/>
<dbReference type="InParanoid" id="Q6IPX3"/>
<dbReference type="OMA" id="SSQYPRC"/>
<dbReference type="OrthoDB" id="9837766at2759"/>
<dbReference type="PAN-GO" id="Q6IPX3">
    <property type="GO annotations" value="2 GO annotations based on evolutionary models"/>
</dbReference>
<dbReference type="PhylomeDB" id="Q6IPX3"/>
<dbReference type="TreeFam" id="TF336871"/>
<dbReference type="PathwayCommons" id="Q6IPX3"/>
<dbReference type="SignaLink" id="Q6IPX3"/>
<dbReference type="Pharos" id="Q6IPX3">
    <property type="development level" value="Tdark"/>
</dbReference>
<dbReference type="PRO" id="PR:Q6IPX3"/>
<dbReference type="Proteomes" id="UP000005640">
    <property type="component" value="Chromosome X"/>
</dbReference>
<dbReference type="RNAct" id="Q6IPX3">
    <property type="molecule type" value="protein"/>
</dbReference>
<dbReference type="Bgee" id="ENSG00000204071">
    <property type="expression patterns" value="Expressed in superior frontal gyrus and 88 other cell types or tissues"/>
</dbReference>
<dbReference type="ExpressionAtlas" id="Q6IPX3">
    <property type="expression patterns" value="baseline and differential"/>
</dbReference>
<dbReference type="GO" id="GO:0005634">
    <property type="term" value="C:nucleus"/>
    <property type="evidence" value="ECO:0007669"/>
    <property type="project" value="UniProtKB-SubCell"/>
</dbReference>
<dbReference type="InterPro" id="IPR021156">
    <property type="entry name" value="TF_A-like/BEX"/>
</dbReference>
<dbReference type="Pfam" id="PF04538">
    <property type="entry name" value="BEX"/>
    <property type="match status" value="1"/>
</dbReference>
<accession>Q6IPX3</accession>
<accession>Q5H9J8</accession>
<keyword id="KW-0025">Alternative splicing</keyword>
<keyword id="KW-0539">Nucleus</keyword>
<keyword id="KW-0597">Phosphoprotein</keyword>
<keyword id="KW-1267">Proteomics identification</keyword>
<keyword id="KW-1185">Reference proteome</keyword>
<keyword id="KW-0804">Transcription</keyword>
<keyword id="KW-0805">Transcription regulation</keyword>